<geneLocation type="chloroplast"/>
<gene>
    <name evidence="1" type="primary">clpP</name>
</gene>
<feature type="chain" id="PRO_0000309285" description="ATP-dependent Clp protease proteolytic subunit">
    <location>
        <begin position="1"/>
        <end position="202"/>
    </location>
</feature>
<feature type="active site" description="Nucleophile" evidence="1">
    <location>
        <position position="101"/>
    </location>
</feature>
<feature type="active site" evidence="1">
    <location>
        <position position="126"/>
    </location>
</feature>
<reference key="1">
    <citation type="journal article" date="2005" name="Mol. Biol. Evol.">
        <title>Analysis of Acorus calamus chloroplast genome and its phylogenetic implications.</title>
        <authorList>
            <person name="Goremykin V.V."/>
            <person name="Holland B."/>
            <person name="Hirsch-Ernst K.I."/>
            <person name="Hellwig F.H."/>
        </authorList>
    </citation>
    <scope>NUCLEOTIDE SEQUENCE [LARGE SCALE GENOMIC DNA]</scope>
</reference>
<accession>Q3V509</accession>
<name>CLPP_ACOCL</name>
<proteinExistence type="inferred from homology"/>
<keyword id="KW-0150">Chloroplast</keyword>
<keyword id="KW-0378">Hydrolase</keyword>
<keyword id="KW-0934">Plastid</keyword>
<keyword id="KW-0645">Protease</keyword>
<keyword id="KW-0720">Serine protease</keyword>
<organism>
    <name type="scientific">Acorus calamus</name>
    <name type="common">Sweet flag</name>
    <dbReference type="NCBI Taxonomy" id="4465"/>
    <lineage>
        <taxon>Eukaryota</taxon>
        <taxon>Viridiplantae</taxon>
        <taxon>Streptophyta</taxon>
        <taxon>Embryophyta</taxon>
        <taxon>Tracheophyta</taxon>
        <taxon>Spermatophyta</taxon>
        <taxon>Magnoliopsida</taxon>
        <taxon>Liliopsida</taxon>
        <taxon>Acoraceae</taxon>
        <taxon>Acorus</taxon>
    </lineage>
</organism>
<sequence length="202" mass="22598">MPIGVPKVPFRSPGEEDAAWVDIYNRLHRERLLFLGQELDSEISNQLVGLMVYLSIEDKTRDFFLFINSPGGWVIPGIGLYDTMQFVPPDVHTICMGLAASMGSFILVGGEITKRLAFPHARVMIHQPASSFYEAQAGEFVLEAEELLKLRETLTRVYVQRTGKPLWVVSEDMERDVFLSATEAQAHGIVDLVGDENMGDLV</sequence>
<protein>
    <recommendedName>
        <fullName evidence="1">ATP-dependent Clp protease proteolytic subunit</fullName>
        <ecNumber evidence="1">3.4.21.92</ecNumber>
    </recommendedName>
    <alternativeName>
        <fullName evidence="1">Endopeptidase Clp</fullName>
    </alternativeName>
</protein>
<evidence type="ECO:0000255" key="1">
    <source>
        <dbReference type="HAMAP-Rule" id="MF_00444"/>
    </source>
</evidence>
<comment type="function">
    <text evidence="1">Cleaves peptides in various proteins in a process that requires ATP hydrolysis. Has a chymotrypsin-like activity. Plays a major role in the degradation of misfolded proteins.</text>
</comment>
<comment type="catalytic activity">
    <reaction evidence="1">
        <text>Hydrolysis of proteins to small peptides in the presence of ATP and magnesium. alpha-casein is the usual test substrate. In the absence of ATP, only oligopeptides shorter than five residues are hydrolyzed (such as succinyl-Leu-Tyr-|-NHMec, and Leu-Tyr-Leu-|-Tyr-Trp, in which cleavage of the -Tyr-|-Leu- and -Tyr-|-Trp bonds also occurs).</text>
        <dbReference type="EC" id="3.4.21.92"/>
    </reaction>
</comment>
<comment type="subunit">
    <text>Component of the chloroplastic Clp protease core complex.</text>
</comment>
<comment type="subcellular location">
    <subcellularLocation>
        <location evidence="1">Plastid</location>
        <location evidence="1">Chloroplast stroma</location>
    </subcellularLocation>
</comment>
<comment type="similarity">
    <text evidence="1">Belongs to the peptidase S14 family.</text>
</comment>
<dbReference type="EC" id="3.4.21.92" evidence="1"/>
<dbReference type="EMBL" id="AJ879453">
    <property type="protein sequence ID" value="CAI53819.1"/>
    <property type="molecule type" value="Genomic_DNA"/>
</dbReference>
<dbReference type="RefSeq" id="YP_319788.1">
    <property type="nucleotide sequence ID" value="NC_007407.1"/>
</dbReference>
<dbReference type="SMR" id="Q3V509"/>
<dbReference type="MEROPS" id="S14.002"/>
<dbReference type="GeneID" id="3677512"/>
<dbReference type="GO" id="GO:0009570">
    <property type="term" value="C:chloroplast stroma"/>
    <property type="evidence" value="ECO:0007669"/>
    <property type="project" value="UniProtKB-SubCell"/>
</dbReference>
<dbReference type="GO" id="GO:0009368">
    <property type="term" value="C:endopeptidase Clp complex"/>
    <property type="evidence" value="ECO:0007669"/>
    <property type="project" value="TreeGrafter"/>
</dbReference>
<dbReference type="GO" id="GO:0004176">
    <property type="term" value="F:ATP-dependent peptidase activity"/>
    <property type="evidence" value="ECO:0007669"/>
    <property type="project" value="InterPro"/>
</dbReference>
<dbReference type="GO" id="GO:0051117">
    <property type="term" value="F:ATPase binding"/>
    <property type="evidence" value="ECO:0007669"/>
    <property type="project" value="TreeGrafter"/>
</dbReference>
<dbReference type="GO" id="GO:0004252">
    <property type="term" value="F:serine-type endopeptidase activity"/>
    <property type="evidence" value="ECO:0007669"/>
    <property type="project" value="UniProtKB-UniRule"/>
</dbReference>
<dbReference type="GO" id="GO:0006515">
    <property type="term" value="P:protein quality control for misfolded or incompletely synthesized proteins"/>
    <property type="evidence" value="ECO:0007669"/>
    <property type="project" value="TreeGrafter"/>
</dbReference>
<dbReference type="CDD" id="cd07017">
    <property type="entry name" value="S14_ClpP_2"/>
    <property type="match status" value="1"/>
</dbReference>
<dbReference type="FunFam" id="3.90.226.10:FF:000006">
    <property type="entry name" value="ATP-dependent Clp protease proteolytic subunit"/>
    <property type="match status" value="1"/>
</dbReference>
<dbReference type="Gene3D" id="3.90.226.10">
    <property type="entry name" value="2-enoyl-CoA Hydratase, Chain A, domain 1"/>
    <property type="match status" value="1"/>
</dbReference>
<dbReference type="HAMAP" id="MF_00444">
    <property type="entry name" value="ClpP"/>
    <property type="match status" value="1"/>
</dbReference>
<dbReference type="InterPro" id="IPR001907">
    <property type="entry name" value="ClpP"/>
</dbReference>
<dbReference type="InterPro" id="IPR029045">
    <property type="entry name" value="ClpP/crotonase-like_dom_sf"/>
</dbReference>
<dbReference type="InterPro" id="IPR023562">
    <property type="entry name" value="ClpP/TepA"/>
</dbReference>
<dbReference type="InterPro" id="IPR033135">
    <property type="entry name" value="ClpP_His_AS"/>
</dbReference>
<dbReference type="InterPro" id="IPR018215">
    <property type="entry name" value="ClpP_Ser_AS"/>
</dbReference>
<dbReference type="PANTHER" id="PTHR10381">
    <property type="entry name" value="ATP-DEPENDENT CLP PROTEASE PROTEOLYTIC SUBUNIT"/>
    <property type="match status" value="1"/>
</dbReference>
<dbReference type="PANTHER" id="PTHR10381:SF15">
    <property type="entry name" value="CHLOROPLASTIC ATP-DEPENDENT CLP PROTEASE PROTEOLYTIC SUBUNIT 1"/>
    <property type="match status" value="1"/>
</dbReference>
<dbReference type="Pfam" id="PF00574">
    <property type="entry name" value="CLP_protease"/>
    <property type="match status" value="1"/>
</dbReference>
<dbReference type="PRINTS" id="PR00127">
    <property type="entry name" value="CLPPROTEASEP"/>
</dbReference>
<dbReference type="SUPFAM" id="SSF52096">
    <property type="entry name" value="ClpP/crotonase"/>
    <property type="match status" value="1"/>
</dbReference>
<dbReference type="PROSITE" id="PS00382">
    <property type="entry name" value="CLP_PROTEASE_HIS"/>
    <property type="match status" value="1"/>
</dbReference>
<dbReference type="PROSITE" id="PS00381">
    <property type="entry name" value="CLP_PROTEASE_SER"/>
    <property type="match status" value="1"/>
</dbReference>